<gene>
    <name type="primary">PEX19</name>
    <name type="synonym">PAS12</name>
    <name type="ordered locus">YDL065C</name>
    <name type="ORF">D2528</name>
</gene>
<sequence length="342" mass="38706">MNENEYDNFDDLDDLLDEDPTKLDEAEPDDVQAKGSVYNDSENKEKNAESKDSDGVQVANESEEDPELKEMMVDLQNEFANLMKNNGNENNVKTEDFNKLISALEEAAKVPHQQMEQGCSSLKSNSTDKGTVNGSNPGFKNIVSNTLDRLKENGNKVDTSLAEETKESQRSGQNNNIDDILSQLLDQMVASGGKESAENQFDLKDGEMDDAITKILDQMTSKEVLYEPMKEMRSEFGVWFQENGENEEHKEKIGTYKRQFNIVDEIVNIYELKDYDELKHKDRVTELLDELEQLGDSPIRSANSPLKHGNEEEELMKMLEIDGNDPNLGNLDKELTDGCKQQ</sequence>
<proteinExistence type="evidence at protein level"/>
<reference key="1">
    <citation type="journal article" date="1998" name="Mol. Cell. Biol.">
        <title>Pex19p, a farnesylated protein essential for peroxisome biogenesis.</title>
        <authorList>
            <person name="Goette K."/>
            <person name="Girzalsky W."/>
            <person name="Linkert M."/>
            <person name="Baumgart E."/>
            <person name="Kammerer S."/>
            <person name="Kunau W.-H."/>
            <person name="Erdmann R."/>
        </authorList>
    </citation>
    <scope>NUCLEOTIDE SEQUENCE [GENOMIC DNA]</scope>
    <scope>FUNCTION</scope>
    <scope>INTERACTION WITH PEX3</scope>
    <scope>INDUCTION</scope>
    <scope>SUBCELLULAR LOCATION</scope>
    <scope>MUTAGENESIS OF CYS-339</scope>
    <scope>ISOPRENYLATION AT CYS-339</scope>
</reference>
<reference key="2">
    <citation type="journal article" date="1997" name="Nature">
        <title>The nucleotide sequence of Saccharomyces cerevisiae chromosome IV.</title>
        <authorList>
            <person name="Jacq C."/>
            <person name="Alt-Moerbe J."/>
            <person name="Andre B."/>
            <person name="Arnold W."/>
            <person name="Bahr A."/>
            <person name="Ballesta J.P.G."/>
            <person name="Bargues M."/>
            <person name="Baron L."/>
            <person name="Becker A."/>
            <person name="Biteau N."/>
            <person name="Bloecker H."/>
            <person name="Blugeon C."/>
            <person name="Boskovic J."/>
            <person name="Brandt P."/>
            <person name="Brueckner M."/>
            <person name="Buitrago M.J."/>
            <person name="Coster F."/>
            <person name="Delaveau T."/>
            <person name="del Rey F."/>
            <person name="Dujon B."/>
            <person name="Eide L.G."/>
            <person name="Garcia-Cantalejo J.M."/>
            <person name="Goffeau A."/>
            <person name="Gomez-Peris A."/>
            <person name="Granotier C."/>
            <person name="Hanemann V."/>
            <person name="Hankeln T."/>
            <person name="Hoheisel J.D."/>
            <person name="Jaeger W."/>
            <person name="Jimenez A."/>
            <person name="Jonniaux J.-L."/>
            <person name="Kraemer C."/>
            <person name="Kuester H."/>
            <person name="Laamanen P."/>
            <person name="Legros Y."/>
            <person name="Louis E.J."/>
            <person name="Moeller-Rieker S."/>
            <person name="Monnet A."/>
            <person name="Moro M."/>
            <person name="Mueller-Auer S."/>
            <person name="Nussbaumer B."/>
            <person name="Paricio N."/>
            <person name="Paulin L."/>
            <person name="Perea J."/>
            <person name="Perez-Alonso M."/>
            <person name="Perez-Ortin J.E."/>
            <person name="Pohl T.M."/>
            <person name="Prydz H."/>
            <person name="Purnelle B."/>
            <person name="Rasmussen S.W."/>
            <person name="Remacha M.A."/>
            <person name="Revuelta J.L."/>
            <person name="Rieger M."/>
            <person name="Salom D."/>
            <person name="Saluz H.P."/>
            <person name="Saiz J.E."/>
            <person name="Saren A.-M."/>
            <person name="Schaefer M."/>
            <person name="Scharfe M."/>
            <person name="Schmidt E.R."/>
            <person name="Schneider C."/>
            <person name="Scholler P."/>
            <person name="Schwarz S."/>
            <person name="Soler-Mira A."/>
            <person name="Urrestarazu L.A."/>
            <person name="Verhasselt P."/>
            <person name="Vissers S."/>
            <person name="Voet M."/>
            <person name="Volckaert G."/>
            <person name="Wagner G."/>
            <person name="Wambutt R."/>
            <person name="Wedler E."/>
            <person name="Wedler H."/>
            <person name="Woelfl S."/>
            <person name="Harris D.E."/>
            <person name="Bowman S."/>
            <person name="Brown D."/>
            <person name="Churcher C.M."/>
            <person name="Connor R."/>
            <person name="Dedman K."/>
            <person name="Gentles S."/>
            <person name="Hamlin N."/>
            <person name="Hunt S."/>
            <person name="Jones L."/>
            <person name="McDonald S."/>
            <person name="Murphy L.D."/>
            <person name="Niblett D."/>
            <person name="Odell C."/>
            <person name="Oliver K."/>
            <person name="Rajandream M.A."/>
            <person name="Richards C."/>
            <person name="Shore L."/>
            <person name="Walsh S.V."/>
            <person name="Barrell B.G."/>
            <person name="Dietrich F.S."/>
            <person name="Mulligan J.T."/>
            <person name="Allen E."/>
            <person name="Araujo R."/>
            <person name="Aviles E."/>
            <person name="Berno A."/>
            <person name="Carpenter J."/>
            <person name="Chen E."/>
            <person name="Cherry J.M."/>
            <person name="Chung E."/>
            <person name="Duncan M."/>
            <person name="Hunicke-Smith S."/>
            <person name="Hyman R.W."/>
            <person name="Komp C."/>
            <person name="Lashkari D."/>
            <person name="Lew H."/>
            <person name="Lin D."/>
            <person name="Mosedale D."/>
            <person name="Nakahara K."/>
            <person name="Namath A."/>
            <person name="Oefner P."/>
            <person name="Oh C."/>
            <person name="Petel F.X."/>
            <person name="Roberts D."/>
            <person name="Schramm S."/>
            <person name="Schroeder M."/>
            <person name="Shogren T."/>
            <person name="Shroff N."/>
            <person name="Winant A."/>
            <person name="Yelton M.A."/>
            <person name="Botstein D."/>
            <person name="Davis R.W."/>
            <person name="Johnston M."/>
            <person name="Andrews S."/>
            <person name="Brinkman R."/>
            <person name="Cooper J."/>
            <person name="Ding H."/>
            <person name="Du Z."/>
            <person name="Favello A."/>
            <person name="Fulton L."/>
            <person name="Gattung S."/>
            <person name="Greco T."/>
            <person name="Hallsworth K."/>
            <person name="Hawkins J."/>
            <person name="Hillier L.W."/>
            <person name="Jier M."/>
            <person name="Johnson D."/>
            <person name="Johnston L."/>
            <person name="Kirsten J."/>
            <person name="Kucaba T."/>
            <person name="Langston Y."/>
            <person name="Latreille P."/>
            <person name="Le T."/>
            <person name="Mardis E."/>
            <person name="Menezes S."/>
            <person name="Miller N."/>
            <person name="Nhan M."/>
            <person name="Pauley A."/>
            <person name="Peluso D."/>
            <person name="Rifkin L."/>
            <person name="Riles L."/>
            <person name="Taich A."/>
            <person name="Trevaskis E."/>
            <person name="Vignati D."/>
            <person name="Wilcox L."/>
            <person name="Wohldman P."/>
            <person name="Vaudin M."/>
            <person name="Wilson R."/>
            <person name="Waterston R."/>
            <person name="Albermann K."/>
            <person name="Hani J."/>
            <person name="Heumann K."/>
            <person name="Kleine K."/>
            <person name="Mewes H.-W."/>
            <person name="Zollner A."/>
            <person name="Zaccaria P."/>
        </authorList>
    </citation>
    <scope>NUCLEOTIDE SEQUENCE [LARGE SCALE GENOMIC DNA]</scope>
    <source>
        <strain>ATCC 204508 / S288c</strain>
    </source>
</reference>
<reference key="3">
    <citation type="journal article" date="2014" name="G3 (Bethesda)">
        <title>The reference genome sequence of Saccharomyces cerevisiae: Then and now.</title>
        <authorList>
            <person name="Engel S.R."/>
            <person name="Dietrich F.S."/>
            <person name="Fisk D.G."/>
            <person name="Binkley G."/>
            <person name="Balakrishnan R."/>
            <person name="Costanzo M.C."/>
            <person name="Dwight S.S."/>
            <person name="Hitz B.C."/>
            <person name="Karra K."/>
            <person name="Nash R.S."/>
            <person name="Weng S."/>
            <person name="Wong E.D."/>
            <person name="Lloyd P."/>
            <person name="Skrzypek M.S."/>
            <person name="Miyasato S.R."/>
            <person name="Simison M."/>
            <person name="Cherry J.M."/>
        </authorList>
    </citation>
    <scope>GENOME REANNOTATION</scope>
    <source>
        <strain>ATCC 204508 / S288c</strain>
    </source>
</reference>
<reference key="4">
    <citation type="journal article" date="2000" name="EMBO J.">
        <title>Saccharomyces cerevisiae Pex3p and Pex19p are required for proper localization and stability of peroxisomal membrane proteins.</title>
        <authorList>
            <person name="Hettema E.H."/>
            <person name="Girzalsky W."/>
            <person name="van den Berg M."/>
            <person name="Erdmann R."/>
            <person name="Distel B."/>
        </authorList>
    </citation>
    <scope>FUNCTION</scope>
</reference>
<reference key="5">
    <citation type="journal article" date="2003" name="J. Cell Sci.">
        <title>Pex10p links the ubiquitin conjugating enzyme Pex4p to the protein import machinery of the peroxisome.</title>
        <authorList>
            <person name="Eckert J.H."/>
            <person name="Johnsson N."/>
        </authorList>
    </citation>
    <scope>INTERACTION WITH PEROXISOMAL MEMBRANE PROTEINS</scope>
</reference>
<reference key="6">
    <citation type="journal article" date="2003" name="Mol. Cell">
        <title>Assigning function to yeast proteins by integration of technologies.</title>
        <authorList>
            <person name="Hazbun T.R."/>
            <person name="Malmstroem L."/>
            <person name="Anderson S."/>
            <person name="Graczyk B.J."/>
            <person name="Fox B."/>
            <person name="Riffle M."/>
            <person name="Sundin B.A."/>
            <person name="Aranda J.D."/>
            <person name="McDonald W.H."/>
            <person name="Chiu C.-H."/>
            <person name="Snydsman B.E."/>
            <person name="Bradley P."/>
            <person name="Muller E.G.D."/>
            <person name="Fields S."/>
            <person name="Baker D."/>
            <person name="Yates J.R. III"/>
            <person name="Davis T.N."/>
        </authorList>
    </citation>
    <scope>IDENTIFICATION BY MASS SPECTROMETRY</scope>
</reference>
<reference key="7">
    <citation type="journal article" date="2003" name="Nature">
        <title>Sequencing and comparison of yeast species to identify genes and regulatory elements.</title>
        <authorList>
            <person name="Kellis M."/>
            <person name="Patterson N."/>
            <person name="Endrizzi M."/>
            <person name="Birren B.W."/>
            <person name="Lander E.S."/>
        </authorList>
    </citation>
    <scope>IDENTIFICATION OF PROBABLE INITIATION SITE</scope>
</reference>
<reference key="8">
    <citation type="journal article" date="2003" name="Nature">
        <title>Global analysis of protein localization in budding yeast.</title>
        <authorList>
            <person name="Huh W.-K."/>
            <person name="Falvo J.V."/>
            <person name="Gerke L.C."/>
            <person name="Carroll A.S."/>
            <person name="Howson R.W."/>
            <person name="Weissman J.S."/>
            <person name="O'Shea E.K."/>
        </authorList>
    </citation>
    <scope>SUBCELLULAR LOCATION [LARGE SCALE ANALYSIS]</scope>
</reference>
<reference key="9">
    <citation type="journal article" date="2003" name="Nature">
        <title>Global analysis of protein expression in yeast.</title>
        <authorList>
            <person name="Ghaemmaghami S."/>
            <person name="Huh W.-K."/>
            <person name="Bower K."/>
            <person name="Howson R.W."/>
            <person name="Belle A."/>
            <person name="Dephoure N."/>
            <person name="O'Shea E.K."/>
            <person name="Weissman J.S."/>
        </authorList>
    </citation>
    <scope>LEVEL OF PROTEIN EXPRESSION [LARGE SCALE ANALYSIS]</scope>
</reference>
<reference key="10">
    <citation type="journal article" date="2003" name="Science">
        <title>Finding functional features in Saccharomyces genomes by phylogenetic footprinting.</title>
        <authorList>
            <person name="Cliften P.F."/>
            <person name="Sudarsanam P."/>
            <person name="Desikan A."/>
            <person name="Fulton L."/>
            <person name="Fulton B."/>
            <person name="Majors J."/>
            <person name="Waterston R."/>
            <person name="Cohen B.A."/>
            <person name="Johnston M."/>
        </authorList>
    </citation>
    <scope>IDENTIFICATION OF PROBABLE INITIATION SITE</scope>
</reference>
<reference key="11">
    <citation type="journal article" date="2004" name="Mol. Biol. Cell">
        <title>Peroxisomal membrane proteins contain common Pex19p-binding sites that are an integral part of their targeting signals.</title>
        <authorList>
            <person name="Rottensteiner H."/>
            <person name="Kramer A."/>
            <person name="Lorenzen S."/>
            <person name="Stein K."/>
            <person name="Landgraf C."/>
            <person name="Volkmer-Engert R."/>
            <person name="Erdmann R."/>
        </authorList>
    </citation>
    <scope>FUNCTION</scope>
    <scope>INTERACTION WITH PEX11; PEX13 AND PEX25</scope>
</reference>
<reference key="12">
    <citation type="journal article" date="2005" name="Cell">
        <title>Contribution of the endoplasmic reticulum to peroxisome formation.</title>
        <authorList>
            <person name="Hoepfner D."/>
            <person name="Schildknegt D."/>
            <person name="Braakman I."/>
            <person name="Philippsen P."/>
            <person name="Tabak H.F."/>
        </authorList>
    </citation>
    <scope>SUBCELLULAR LOCATION</scope>
</reference>
<reference key="13">
    <citation type="journal article" date="2005" name="J. Biol. Chem.">
        <title>Pex3p initiates the formation of a preperoxisomal compartment from a subdomain of the endoplasmic reticulum in Saccharomyces cerevisiae.</title>
        <authorList>
            <person name="Tam Y.Y.C."/>
            <person name="Fagarasanu A."/>
            <person name="Fagarasanu M."/>
            <person name="Rachubinski R.A."/>
        </authorList>
    </citation>
    <scope>FUNCTION</scope>
</reference>
<reference key="14">
    <citation type="journal article" date="2006" name="Cell. Mol. Life Sci.">
        <title>Farnesylation of Pex19p is not essential for peroxisome biogenesis in yeast and mammalian cells.</title>
        <authorList>
            <person name="Vastiau I.M.K."/>
            <person name="Anthonio E.A."/>
            <person name="Brams M."/>
            <person name="Brees C."/>
            <person name="Young S.G."/>
            <person name="Van de Velde S."/>
            <person name="Wanders R.J.A."/>
            <person name="Mannaerts G.P."/>
            <person name="Baes M."/>
            <person name="Van Veldhoven P.P."/>
            <person name="Fransen M."/>
        </authorList>
    </citation>
    <scope>MUTAGENESIS OF CYS-339</scope>
</reference>
<reference key="15">
    <citation type="journal article" date="2006" name="J. Biol. Chem.">
        <title>The dynamin-like protein Vps1p of the yeast Saccharomyces cerevisiae associates with peroxisomes in a Pex19p-dependent manner.</title>
        <authorList>
            <person name="Vizeacoumar F.J."/>
            <person name="Vreden W.N."/>
            <person name="Fagarasanu M."/>
            <person name="Eitzen G.A."/>
            <person name="Aitchison J.D."/>
            <person name="Rachubinski R.A."/>
        </authorList>
    </citation>
    <scope>FUNCTION</scope>
    <scope>INTERACTION WITH VPS1</scope>
</reference>
<reference key="16">
    <citation type="journal article" date="2006" name="J. Biol. Chem.">
        <title>Pex19p binds Pex30p and Pex32p at regions required for their peroxisomal localization but separate from their peroxisomal targeting signals.</title>
        <authorList>
            <person name="Vizeacoumar F.J."/>
            <person name="Vreden W.N."/>
            <person name="Aitchison J.D."/>
            <person name="Rachubinski R.A."/>
        </authorList>
    </citation>
    <scope>FUNCTION</scope>
    <scope>INTERACTION WITH PEX11; PEX30 AND PEX32</scope>
</reference>
<reference key="17">
    <citation type="journal article" date="2006" name="J. Biol. Chem.">
        <title>Pex19p-dependent targeting of Pex17p, a peripheral component of the peroxisomal protein import machinery.</title>
        <authorList>
            <person name="Girzalsky W."/>
            <person name="Hoffmann L.S."/>
            <person name="Schemenewitz A."/>
            <person name="Nolte A."/>
            <person name="Kunau W.-H."/>
            <person name="Erdmann R."/>
        </authorList>
    </citation>
    <scope>FUNCTION</scope>
    <scope>INTERACTION WITH PEX17</scope>
</reference>
<reference key="18">
    <citation type="journal article" date="2007" name="J. Proteome Res.">
        <title>Large-scale phosphorylation analysis of alpha-factor-arrested Saccharomyces cerevisiae.</title>
        <authorList>
            <person name="Li X."/>
            <person name="Gerber S.A."/>
            <person name="Rudner A.D."/>
            <person name="Beausoleil S.A."/>
            <person name="Haas W."/>
            <person name="Villen J."/>
            <person name="Elias J.E."/>
            <person name="Gygi S.P."/>
        </authorList>
    </citation>
    <scope>PHOSPHORYLATION [LARGE SCALE ANALYSIS] AT SER-304</scope>
    <scope>IDENTIFICATION BY MASS SPECTROMETRY [LARGE SCALE ANALYSIS]</scope>
    <source>
        <strain>ADR376</strain>
    </source>
</reference>
<reference key="19">
    <citation type="journal article" date="2008" name="Mol. Cell. Proteomics">
        <title>A multidimensional chromatography technology for in-depth phosphoproteome analysis.</title>
        <authorList>
            <person name="Albuquerque C.P."/>
            <person name="Smolka M.B."/>
            <person name="Payne S.H."/>
            <person name="Bafna V."/>
            <person name="Eng J."/>
            <person name="Zhou H."/>
        </authorList>
    </citation>
    <scope>PHOSPHORYLATION [LARGE SCALE ANALYSIS] AT SER-62 AND SER-304</scope>
    <scope>IDENTIFICATION BY MASS SPECTROMETRY [LARGE SCALE ANALYSIS]</scope>
</reference>
<reference key="20">
    <citation type="journal article" date="2009" name="Science">
        <title>Global analysis of Cdk1 substrate phosphorylation sites provides insights into evolution.</title>
        <authorList>
            <person name="Holt L.J."/>
            <person name="Tuch B.B."/>
            <person name="Villen J."/>
            <person name="Johnson A.D."/>
            <person name="Gygi S.P."/>
            <person name="Morgan D.O."/>
        </authorList>
    </citation>
    <scope>PHOSPHORYLATION [LARGE SCALE ANALYSIS] AT SER-62</scope>
    <scope>IDENTIFICATION BY MASS SPECTROMETRY [LARGE SCALE ANALYSIS]</scope>
</reference>
<protein>
    <recommendedName>
        <fullName>Peroxisomal membrane protein import receptor PEX19</fullName>
    </recommendedName>
    <alternativeName>
        <fullName>Peroxin-19</fullName>
    </alternativeName>
</protein>
<evidence type="ECO:0000256" key="1">
    <source>
        <dbReference type="SAM" id="MobiDB-lite"/>
    </source>
</evidence>
<evidence type="ECO:0000269" key="2">
    <source>
    </source>
</evidence>
<evidence type="ECO:0000269" key="3">
    <source>
    </source>
</evidence>
<evidence type="ECO:0000269" key="4">
    <source>
    </source>
</evidence>
<evidence type="ECO:0000269" key="5">
    <source>
    </source>
</evidence>
<evidence type="ECO:0000269" key="6">
    <source>
    </source>
</evidence>
<evidence type="ECO:0000269" key="7">
    <source>
    </source>
</evidence>
<evidence type="ECO:0000269" key="8">
    <source>
    </source>
</evidence>
<evidence type="ECO:0000269" key="9">
    <source>
    </source>
</evidence>
<evidence type="ECO:0000269" key="10">
    <source>
    </source>
</evidence>
<evidence type="ECO:0000269" key="11">
    <source>
    </source>
</evidence>
<evidence type="ECO:0000269" key="12">
    <source>
    </source>
</evidence>
<evidence type="ECO:0000269" key="13">
    <source>
    </source>
</evidence>
<evidence type="ECO:0000305" key="14"/>
<evidence type="ECO:0007744" key="15">
    <source>
    </source>
</evidence>
<evidence type="ECO:0007744" key="16">
    <source>
    </source>
</evidence>
<evidence type="ECO:0007744" key="17">
    <source>
    </source>
</evidence>
<name>PEX19_YEAST</name>
<dbReference type="EMBL" id="Z74113">
    <property type="protein sequence ID" value="CAA98630.1"/>
    <property type="status" value="ALT_INIT"/>
    <property type="molecule type" value="Genomic_DNA"/>
</dbReference>
<dbReference type="EMBL" id="BK006938">
    <property type="protein sequence ID" value="DAA11792.1"/>
    <property type="molecule type" value="Genomic_DNA"/>
</dbReference>
<dbReference type="PIR" id="S67600">
    <property type="entry name" value="S67600"/>
</dbReference>
<dbReference type="RefSeq" id="NP_010218.2">
    <property type="nucleotide sequence ID" value="NM_001180124.1"/>
</dbReference>
<dbReference type="SMR" id="Q07418"/>
<dbReference type="BioGRID" id="31994">
    <property type="interactions" value="401"/>
</dbReference>
<dbReference type="DIP" id="DIP-1563N"/>
<dbReference type="FunCoup" id="Q07418">
    <property type="interactions" value="341"/>
</dbReference>
<dbReference type="IntAct" id="Q07418">
    <property type="interactions" value="19"/>
</dbReference>
<dbReference type="MINT" id="Q07418"/>
<dbReference type="STRING" id="4932.YDL065C"/>
<dbReference type="TCDB" id="3.A.20.1.5">
    <property type="family name" value="the peroxisomal protein importer (ppi) family"/>
</dbReference>
<dbReference type="TCDB" id="9.A.17.1.1">
    <property type="family name" value="the integral membrane peroxisomal protein importer-2 (ppi2) family"/>
</dbReference>
<dbReference type="iPTMnet" id="Q07418"/>
<dbReference type="PaxDb" id="4932-YDL065C"/>
<dbReference type="PeptideAtlas" id="Q07418"/>
<dbReference type="EnsemblFungi" id="YDL065C_mRNA">
    <property type="protein sequence ID" value="YDL065C"/>
    <property type="gene ID" value="YDL065C"/>
</dbReference>
<dbReference type="GeneID" id="851494"/>
<dbReference type="KEGG" id="sce:YDL065C"/>
<dbReference type="AGR" id="SGD:S000002223"/>
<dbReference type="SGD" id="S000002223">
    <property type="gene designation" value="PEX19"/>
</dbReference>
<dbReference type="VEuPathDB" id="FungiDB:YDL065C"/>
<dbReference type="eggNOG" id="KOG3133">
    <property type="taxonomic scope" value="Eukaryota"/>
</dbReference>
<dbReference type="GeneTree" id="ENSGT00390000010993"/>
<dbReference type="HOGENOM" id="CLU_863835_0_0_1"/>
<dbReference type="InParanoid" id="Q07418"/>
<dbReference type="OMA" id="YEPMKEM"/>
<dbReference type="OrthoDB" id="21292at2759"/>
<dbReference type="BioCyc" id="YEAST:G3O-29480-MONOMER"/>
<dbReference type="Reactome" id="R-SCE-1369062">
    <property type="pathway name" value="ABC transporters in lipid homeostasis"/>
</dbReference>
<dbReference type="Reactome" id="R-SCE-9603798">
    <property type="pathway name" value="Class I peroxisomal membrane protein import"/>
</dbReference>
<dbReference type="BioGRID-ORCS" id="851494">
    <property type="hits" value="2 hits in 10 CRISPR screens"/>
</dbReference>
<dbReference type="PRO" id="PR:Q07418"/>
<dbReference type="Proteomes" id="UP000002311">
    <property type="component" value="Chromosome IV"/>
</dbReference>
<dbReference type="RNAct" id="Q07418">
    <property type="molecule type" value="protein"/>
</dbReference>
<dbReference type="GO" id="GO:0005829">
    <property type="term" value="C:cytosol"/>
    <property type="evidence" value="ECO:0000314"/>
    <property type="project" value="SGD"/>
</dbReference>
<dbReference type="GO" id="GO:0005783">
    <property type="term" value="C:endoplasmic reticulum"/>
    <property type="evidence" value="ECO:0000314"/>
    <property type="project" value="SGD"/>
</dbReference>
<dbReference type="GO" id="GO:0005789">
    <property type="term" value="C:endoplasmic reticulum membrane"/>
    <property type="evidence" value="ECO:0007669"/>
    <property type="project" value="UniProtKB-SubCell"/>
</dbReference>
<dbReference type="GO" id="GO:1990429">
    <property type="term" value="C:peroxisomal importomer complex"/>
    <property type="evidence" value="ECO:0000314"/>
    <property type="project" value="SGD"/>
</dbReference>
<dbReference type="GO" id="GO:0005778">
    <property type="term" value="C:peroxisomal membrane"/>
    <property type="evidence" value="ECO:0000314"/>
    <property type="project" value="SGD"/>
</dbReference>
<dbReference type="GO" id="GO:0033328">
    <property type="term" value="F:peroxisome membrane targeting sequence binding"/>
    <property type="evidence" value="ECO:0000353"/>
    <property type="project" value="SGD"/>
</dbReference>
<dbReference type="GO" id="GO:0032581">
    <property type="term" value="P:ER-dependent peroxisome organization"/>
    <property type="evidence" value="ECO:0000315"/>
    <property type="project" value="SGD"/>
</dbReference>
<dbReference type="GO" id="GO:0045033">
    <property type="term" value="P:peroxisome inheritance"/>
    <property type="evidence" value="ECO:0000353"/>
    <property type="project" value="SGD"/>
</dbReference>
<dbReference type="GO" id="GO:0032527">
    <property type="term" value="P:protein exit from endoplasmic reticulum"/>
    <property type="evidence" value="ECO:0000315"/>
    <property type="project" value="SGD"/>
</dbReference>
<dbReference type="GO" id="GO:0045046">
    <property type="term" value="P:protein import into peroxisome membrane"/>
    <property type="evidence" value="ECO:0000315"/>
    <property type="project" value="SGD"/>
</dbReference>
<dbReference type="GO" id="GO:0050821">
    <property type="term" value="P:protein stabilization"/>
    <property type="evidence" value="ECO:0000353"/>
    <property type="project" value="SGD"/>
</dbReference>
<dbReference type="FunFam" id="1.20.120.900:FF:000003">
    <property type="entry name" value="Peroxisomal membrane protein import receptor PEX19"/>
    <property type="match status" value="1"/>
</dbReference>
<dbReference type="Gene3D" id="1.20.120.900">
    <property type="entry name" value="Pex19, mPTS binding domain"/>
    <property type="match status" value="1"/>
</dbReference>
<dbReference type="InterPro" id="IPR006708">
    <property type="entry name" value="Pex19"/>
</dbReference>
<dbReference type="InterPro" id="IPR038322">
    <property type="entry name" value="Pex19_C_sf"/>
</dbReference>
<dbReference type="PANTHER" id="PTHR12774">
    <property type="entry name" value="PEROXISOMAL BIOGENESIS FACTOR 19"/>
    <property type="match status" value="1"/>
</dbReference>
<dbReference type="PANTHER" id="PTHR12774:SF2">
    <property type="entry name" value="PEROXISOMAL BIOGENESIS FACTOR 19"/>
    <property type="match status" value="1"/>
</dbReference>
<dbReference type="Pfam" id="PF04614">
    <property type="entry name" value="Pex19"/>
    <property type="match status" value="1"/>
</dbReference>
<comment type="function">
    <text evidence="2 6 8 9 10 11 13">Required for proper post-translational import and stabilization of peroxisomal membrane proteins (PMPs). Acts as a cytosolic import receptor for PMPs and delivers them to the docking factor PEX3 at the peroxisomal membrane for subsequent insertion into the membrane. Acts as a chaperone in stabilizing or maintaining PMPs in the lipid bilayer. Directs PEX17, a peripheral component of the peroxisomal matrix protein translocation machinery, to peroxisomes. Stabilizes VPS1, a protein required for peroxisomal fission, at the peroxisomal membrane. Also acts in conjunction with PEX3 in the formation of peroxisomes from preperoxisomal compartments at the endoplasmic reticulum during de novo peroxisome synthesis, probably via the import of additional PMPs.</text>
</comment>
<comment type="subunit">
    <text evidence="3 6 9 10 11 13">Interacts (farnesylated) with PEX3; farnesylation is required for this interaction. Interacts with PEX2, PEX5, PEX10, PEX11, PEX12, PEX13, PEX14, PEX17, PEX22, PEX25, PEX30 and PEX32; the interaction requires well-defined PEX19-binding sites within the peroxisomal membrane protein targeting signal (mPTS) of the PMPs and is independent on the presence of PEX3. Interacts with VPS1.</text>
</comment>
<comment type="interaction">
    <interactant intactId="EBI-292">
        <id>Q07418</id>
    </interactant>
    <interactant intactId="EBI-27354">
        <id>Q03824</id>
        <label>INP2</label>
    </interactant>
    <organismsDiffer>false</organismsDiffer>
    <experiments>3</experiments>
</comment>
<comment type="subcellular location">
    <subcellularLocation>
        <location evidence="4 7 13">Cytoplasm</location>
    </subcellularLocation>
    <subcellularLocation>
        <location evidence="7">Peroxisome membrane</location>
        <topology evidence="14">Lipid-anchor</topology>
        <orientation evidence="14">Cytoplasmic side</orientation>
    </subcellularLocation>
    <subcellularLocation>
        <location evidence="7">Endoplasmic reticulum membrane</location>
    </subcellularLocation>
    <text evidence="7 13">Predominantly cytoplasmic (PubMed:9418908). Concentrates in a PEX3-dependent manner to defined foci on the endoplasmic reticulum membrane, which then bud off to form newly sythesized peroxisomes (PubMed:16009135).</text>
</comment>
<comment type="induction">
    <text evidence="13">By oleic acid (at protein level).</text>
</comment>
<comment type="miscellaneous">
    <text evidence="5">Present with 5350 molecules/cell in log phase SD medium.</text>
</comment>
<comment type="similarity">
    <text evidence="14">Belongs to the peroxin-19 family.</text>
</comment>
<comment type="sequence caution" evidence="14">
    <conflict type="erroneous initiation">
        <sequence resource="EMBL-CDS" id="CAA98630"/>
    </conflict>
</comment>
<organism>
    <name type="scientific">Saccharomyces cerevisiae (strain ATCC 204508 / S288c)</name>
    <name type="common">Baker's yeast</name>
    <dbReference type="NCBI Taxonomy" id="559292"/>
    <lineage>
        <taxon>Eukaryota</taxon>
        <taxon>Fungi</taxon>
        <taxon>Dikarya</taxon>
        <taxon>Ascomycota</taxon>
        <taxon>Saccharomycotina</taxon>
        <taxon>Saccharomycetes</taxon>
        <taxon>Saccharomycetales</taxon>
        <taxon>Saccharomycetaceae</taxon>
        <taxon>Saccharomyces</taxon>
    </lineage>
</organism>
<feature type="chain" id="PRO_0000218763" description="Peroxisomal membrane protein import receptor PEX19">
    <location>
        <begin position="1"/>
        <end position="339"/>
    </location>
</feature>
<feature type="propeptide" id="PRO_0000396705" description="Removed in mature form" evidence="14">
    <location>
        <begin position="340"/>
        <end position="342"/>
    </location>
</feature>
<feature type="region of interest" description="Disordered" evidence="1">
    <location>
        <begin position="1"/>
        <end position="68"/>
    </location>
</feature>
<feature type="region of interest" description="Disordered" evidence="1">
    <location>
        <begin position="119"/>
        <end position="141"/>
    </location>
</feature>
<feature type="region of interest" description="Disordered" evidence="1">
    <location>
        <begin position="321"/>
        <end position="342"/>
    </location>
</feature>
<feature type="compositionally biased region" description="Acidic residues" evidence="1">
    <location>
        <begin position="1"/>
        <end position="18"/>
    </location>
</feature>
<feature type="compositionally biased region" description="Basic and acidic residues" evidence="1">
    <location>
        <begin position="41"/>
        <end position="54"/>
    </location>
</feature>
<feature type="compositionally biased region" description="Basic and acidic residues" evidence="1">
    <location>
        <begin position="331"/>
        <end position="342"/>
    </location>
</feature>
<feature type="modified residue" description="Phosphoserine" evidence="16 17">
    <location>
        <position position="62"/>
    </location>
</feature>
<feature type="modified residue" description="Phosphoserine" evidence="15 16">
    <location>
        <position position="304"/>
    </location>
</feature>
<feature type="modified residue" description="Cysteine methyl ester" evidence="14">
    <location>
        <position position="339"/>
    </location>
</feature>
<feature type="lipid moiety-binding region" description="S-farnesyl cysteine" evidence="13">
    <location>
        <position position="339"/>
    </location>
</feature>
<feature type="mutagenesis site" description="Prevents farnesylation." evidence="12 13">
    <original>C</original>
    <variation>S</variation>
    <variation>R</variation>
    <location>
        <position position="339"/>
    </location>
</feature>
<keyword id="KW-0963">Cytoplasm</keyword>
<keyword id="KW-0256">Endoplasmic reticulum</keyword>
<keyword id="KW-0449">Lipoprotein</keyword>
<keyword id="KW-0472">Membrane</keyword>
<keyword id="KW-0488">Methylation</keyword>
<keyword id="KW-0576">Peroxisome</keyword>
<keyword id="KW-0962">Peroxisome biogenesis</keyword>
<keyword id="KW-0597">Phosphoprotein</keyword>
<keyword id="KW-0636">Prenylation</keyword>
<keyword id="KW-1185">Reference proteome</keyword>
<accession>Q07418</accession>
<accession>D6VRT2</accession>